<reference key="1">
    <citation type="journal article" date="1989" name="J. Biol. Chem.">
        <title>Cloning and recombinant expression of phospholipase A2 present in rheumatoid arthritic synovial fluid.</title>
        <authorList>
            <person name="Seilhamer J.J."/>
            <person name="Pruzanski W."/>
            <person name="Vadas P."/>
            <person name="Plant S."/>
            <person name="Miller J.A."/>
            <person name="Kloss J."/>
            <person name="Johnson L.K."/>
        </authorList>
    </citation>
    <scope>NUCLEOTIDE SEQUENCE [MRNA]</scope>
    <scope>SUBCELLULAR LOCATION</scope>
    <source>
        <tissue>Rheumatoid arthritic synovial fluid</tissue>
    </source>
</reference>
<reference key="2">
    <citation type="journal article" date="1989" name="J. Biol. Chem.">
        <title>Structure and properties of a human non-pancreatic phospholipase A2.</title>
        <authorList>
            <person name="Kramer R.M."/>
            <person name="Hession C."/>
            <person name="Johansen B."/>
            <person name="Hayes G."/>
            <person name="McGray P."/>
            <person name="Chow E.P."/>
            <person name="Tizard R."/>
            <person name="Pepinsky R.B."/>
        </authorList>
    </citation>
    <scope>NUCLEOTIDE SEQUENCE [GENOMIC DNA]</scope>
    <scope>PROTEIN SEQUENCE OF 21-39</scope>
    <scope>FUNCTION</scope>
    <scope>CATALYTIC ACTIVITY</scope>
    <scope>COFACTOR</scope>
    <scope>SUBCELLULAR LOCATION</scope>
</reference>
<reference key="3">
    <citation type="journal article" date="1990" name="Adv. Exp. Med. Biol.">
        <title>Structure and properties of a secretable phospholipase A2 from human platelets.</title>
        <authorList>
            <person name="Kramer R.M."/>
            <person name="Johansen B."/>
            <person name="Hession C."/>
            <person name="Pepinsky R.B."/>
        </authorList>
    </citation>
    <scope>NUCLEOTIDE SEQUENCE [GENOMIC DNA]</scope>
</reference>
<reference key="4">
    <citation type="submission" date="2004-06" db="EMBL/GenBank/DDBJ databases">
        <title>Cloning and sequence determination of human platelet phospholipase A2 from liver tissues.</title>
        <authorList>
            <person name="Liang N.S."/>
            <person name="Fang Z.W."/>
            <person name="Li Y."/>
            <person name="Yang F."/>
            <person name="Lu Y."/>
            <person name="Xie Y.A."/>
        </authorList>
    </citation>
    <scope>NUCLEOTIDE SEQUENCE [MRNA]</scope>
    <source>
        <tissue>Liver</tissue>
    </source>
</reference>
<reference key="5">
    <citation type="submission" date="2004-06" db="EMBL/GenBank/DDBJ databases">
        <title>Cloning of human full open reading frames in Gateway(TM) system entry vector (pDONR201).</title>
        <authorList>
            <person name="Ebert L."/>
            <person name="Schick M."/>
            <person name="Neubert P."/>
            <person name="Schatten R."/>
            <person name="Henze S."/>
            <person name="Korn B."/>
        </authorList>
    </citation>
    <scope>NUCLEOTIDE SEQUENCE [LARGE SCALE MRNA]</scope>
</reference>
<reference key="6">
    <citation type="submission" date="2003-11" db="EMBL/GenBank/DDBJ databases">
        <authorList>
            <consortium name="NIEHS SNPs program"/>
        </authorList>
    </citation>
    <scope>NUCLEOTIDE SEQUENCE [GENOMIC DNA]</scope>
    <scope>VARIANT TYR-19</scope>
</reference>
<reference key="7">
    <citation type="journal article" date="2004" name="Nat. Genet.">
        <title>Complete sequencing and characterization of 21,243 full-length human cDNAs.</title>
        <authorList>
            <person name="Ota T."/>
            <person name="Suzuki Y."/>
            <person name="Nishikawa T."/>
            <person name="Otsuki T."/>
            <person name="Sugiyama T."/>
            <person name="Irie R."/>
            <person name="Wakamatsu A."/>
            <person name="Hayashi K."/>
            <person name="Sato H."/>
            <person name="Nagai K."/>
            <person name="Kimura K."/>
            <person name="Makita H."/>
            <person name="Sekine M."/>
            <person name="Obayashi M."/>
            <person name="Nishi T."/>
            <person name="Shibahara T."/>
            <person name="Tanaka T."/>
            <person name="Ishii S."/>
            <person name="Yamamoto J."/>
            <person name="Saito K."/>
            <person name="Kawai Y."/>
            <person name="Isono Y."/>
            <person name="Nakamura Y."/>
            <person name="Nagahari K."/>
            <person name="Murakami K."/>
            <person name="Yasuda T."/>
            <person name="Iwayanagi T."/>
            <person name="Wagatsuma M."/>
            <person name="Shiratori A."/>
            <person name="Sudo H."/>
            <person name="Hosoiri T."/>
            <person name="Kaku Y."/>
            <person name="Kodaira H."/>
            <person name="Kondo H."/>
            <person name="Sugawara M."/>
            <person name="Takahashi M."/>
            <person name="Kanda K."/>
            <person name="Yokoi T."/>
            <person name="Furuya T."/>
            <person name="Kikkawa E."/>
            <person name="Omura Y."/>
            <person name="Abe K."/>
            <person name="Kamihara K."/>
            <person name="Katsuta N."/>
            <person name="Sato K."/>
            <person name="Tanikawa M."/>
            <person name="Yamazaki M."/>
            <person name="Ninomiya K."/>
            <person name="Ishibashi T."/>
            <person name="Yamashita H."/>
            <person name="Murakawa K."/>
            <person name="Fujimori K."/>
            <person name="Tanai H."/>
            <person name="Kimata M."/>
            <person name="Watanabe M."/>
            <person name="Hiraoka S."/>
            <person name="Chiba Y."/>
            <person name="Ishida S."/>
            <person name="Ono Y."/>
            <person name="Takiguchi S."/>
            <person name="Watanabe S."/>
            <person name="Yosida M."/>
            <person name="Hotuta T."/>
            <person name="Kusano J."/>
            <person name="Kanehori K."/>
            <person name="Takahashi-Fujii A."/>
            <person name="Hara H."/>
            <person name="Tanase T.-O."/>
            <person name="Nomura Y."/>
            <person name="Togiya S."/>
            <person name="Komai F."/>
            <person name="Hara R."/>
            <person name="Takeuchi K."/>
            <person name="Arita M."/>
            <person name="Imose N."/>
            <person name="Musashino K."/>
            <person name="Yuuki H."/>
            <person name="Oshima A."/>
            <person name="Sasaki N."/>
            <person name="Aotsuka S."/>
            <person name="Yoshikawa Y."/>
            <person name="Matsunawa H."/>
            <person name="Ichihara T."/>
            <person name="Shiohata N."/>
            <person name="Sano S."/>
            <person name="Moriya S."/>
            <person name="Momiyama H."/>
            <person name="Satoh N."/>
            <person name="Takami S."/>
            <person name="Terashima Y."/>
            <person name="Suzuki O."/>
            <person name="Nakagawa S."/>
            <person name="Senoh A."/>
            <person name="Mizoguchi H."/>
            <person name="Goto Y."/>
            <person name="Shimizu F."/>
            <person name="Wakebe H."/>
            <person name="Hishigaki H."/>
            <person name="Watanabe T."/>
            <person name="Sugiyama A."/>
            <person name="Takemoto M."/>
            <person name="Kawakami B."/>
            <person name="Yamazaki M."/>
            <person name="Watanabe K."/>
            <person name="Kumagai A."/>
            <person name="Itakura S."/>
            <person name="Fukuzumi Y."/>
            <person name="Fujimori Y."/>
            <person name="Komiyama M."/>
            <person name="Tashiro H."/>
            <person name="Tanigami A."/>
            <person name="Fujiwara T."/>
            <person name="Ono T."/>
            <person name="Yamada K."/>
            <person name="Fujii Y."/>
            <person name="Ozaki K."/>
            <person name="Hirao M."/>
            <person name="Ohmori Y."/>
            <person name="Kawabata A."/>
            <person name="Hikiji T."/>
            <person name="Kobatake N."/>
            <person name="Inagaki H."/>
            <person name="Ikema Y."/>
            <person name="Okamoto S."/>
            <person name="Okitani R."/>
            <person name="Kawakami T."/>
            <person name="Noguchi S."/>
            <person name="Itoh T."/>
            <person name="Shigeta K."/>
            <person name="Senba T."/>
            <person name="Matsumura K."/>
            <person name="Nakajima Y."/>
            <person name="Mizuno T."/>
            <person name="Morinaga M."/>
            <person name="Sasaki M."/>
            <person name="Togashi T."/>
            <person name="Oyama M."/>
            <person name="Hata H."/>
            <person name="Watanabe M."/>
            <person name="Komatsu T."/>
            <person name="Mizushima-Sugano J."/>
            <person name="Satoh T."/>
            <person name="Shirai Y."/>
            <person name="Takahashi Y."/>
            <person name="Nakagawa K."/>
            <person name="Okumura K."/>
            <person name="Nagase T."/>
            <person name="Nomura N."/>
            <person name="Kikuchi H."/>
            <person name="Masuho Y."/>
            <person name="Yamashita R."/>
            <person name="Nakai K."/>
            <person name="Yada T."/>
            <person name="Nakamura Y."/>
            <person name="Ohara O."/>
            <person name="Isogai T."/>
            <person name="Sugano S."/>
        </authorList>
    </citation>
    <scope>NUCLEOTIDE SEQUENCE [LARGE SCALE MRNA]</scope>
    <source>
        <tissue>Tongue</tissue>
    </source>
</reference>
<reference key="8">
    <citation type="journal article" date="2006" name="Nature">
        <title>The DNA sequence and biological annotation of human chromosome 1.</title>
        <authorList>
            <person name="Gregory S.G."/>
            <person name="Barlow K.F."/>
            <person name="McLay K.E."/>
            <person name="Kaul R."/>
            <person name="Swarbreck D."/>
            <person name="Dunham A."/>
            <person name="Scott C.E."/>
            <person name="Howe K.L."/>
            <person name="Woodfine K."/>
            <person name="Spencer C.C.A."/>
            <person name="Jones M.C."/>
            <person name="Gillson C."/>
            <person name="Searle S."/>
            <person name="Zhou Y."/>
            <person name="Kokocinski F."/>
            <person name="McDonald L."/>
            <person name="Evans R."/>
            <person name="Phillips K."/>
            <person name="Atkinson A."/>
            <person name="Cooper R."/>
            <person name="Jones C."/>
            <person name="Hall R.E."/>
            <person name="Andrews T.D."/>
            <person name="Lloyd C."/>
            <person name="Ainscough R."/>
            <person name="Almeida J.P."/>
            <person name="Ambrose K.D."/>
            <person name="Anderson F."/>
            <person name="Andrew R.W."/>
            <person name="Ashwell R.I.S."/>
            <person name="Aubin K."/>
            <person name="Babbage A.K."/>
            <person name="Bagguley C.L."/>
            <person name="Bailey J."/>
            <person name="Beasley H."/>
            <person name="Bethel G."/>
            <person name="Bird C.P."/>
            <person name="Bray-Allen S."/>
            <person name="Brown J.Y."/>
            <person name="Brown A.J."/>
            <person name="Buckley D."/>
            <person name="Burton J."/>
            <person name="Bye J."/>
            <person name="Carder C."/>
            <person name="Chapman J.C."/>
            <person name="Clark S.Y."/>
            <person name="Clarke G."/>
            <person name="Clee C."/>
            <person name="Cobley V."/>
            <person name="Collier R.E."/>
            <person name="Corby N."/>
            <person name="Coville G.J."/>
            <person name="Davies J."/>
            <person name="Deadman R."/>
            <person name="Dunn M."/>
            <person name="Earthrowl M."/>
            <person name="Ellington A.G."/>
            <person name="Errington H."/>
            <person name="Frankish A."/>
            <person name="Frankland J."/>
            <person name="French L."/>
            <person name="Garner P."/>
            <person name="Garnett J."/>
            <person name="Gay L."/>
            <person name="Ghori M.R.J."/>
            <person name="Gibson R."/>
            <person name="Gilby L.M."/>
            <person name="Gillett W."/>
            <person name="Glithero R.J."/>
            <person name="Grafham D.V."/>
            <person name="Griffiths C."/>
            <person name="Griffiths-Jones S."/>
            <person name="Grocock R."/>
            <person name="Hammond S."/>
            <person name="Harrison E.S.I."/>
            <person name="Hart E."/>
            <person name="Haugen E."/>
            <person name="Heath P.D."/>
            <person name="Holmes S."/>
            <person name="Holt K."/>
            <person name="Howden P.J."/>
            <person name="Hunt A.R."/>
            <person name="Hunt S.E."/>
            <person name="Hunter G."/>
            <person name="Isherwood J."/>
            <person name="James R."/>
            <person name="Johnson C."/>
            <person name="Johnson D."/>
            <person name="Joy A."/>
            <person name="Kay M."/>
            <person name="Kershaw J.K."/>
            <person name="Kibukawa M."/>
            <person name="Kimberley A.M."/>
            <person name="King A."/>
            <person name="Knights A.J."/>
            <person name="Lad H."/>
            <person name="Laird G."/>
            <person name="Lawlor S."/>
            <person name="Leongamornlert D.A."/>
            <person name="Lloyd D.M."/>
            <person name="Loveland J."/>
            <person name="Lovell J."/>
            <person name="Lush M.J."/>
            <person name="Lyne R."/>
            <person name="Martin S."/>
            <person name="Mashreghi-Mohammadi M."/>
            <person name="Matthews L."/>
            <person name="Matthews N.S.W."/>
            <person name="McLaren S."/>
            <person name="Milne S."/>
            <person name="Mistry S."/>
            <person name="Moore M.J.F."/>
            <person name="Nickerson T."/>
            <person name="O'Dell C.N."/>
            <person name="Oliver K."/>
            <person name="Palmeiri A."/>
            <person name="Palmer S.A."/>
            <person name="Parker A."/>
            <person name="Patel D."/>
            <person name="Pearce A.V."/>
            <person name="Peck A.I."/>
            <person name="Pelan S."/>
            <person name="Phelps K."/>
            <person name="Phillimore B.J."/>
            <person name="Plumb R."/>
            <person name="Rajan J."/>
            <person name="Raymond C."/>
            <person name="Rouse G."/>
            <person name="Saenphimmachak C."/>
            <person name="Sehra H.K."/>
            <person name="Sheridan E."/>
            <person name="Shownkeen R."/>
            <person name="Sims S."/>
            <person name="Skuce C.D."/>
            <person name="Smith M."/>
            <person name="Steward C."/>
            <person name="Subramanian S."/>
            <person name="Sycamore N."/>
            <person name="Tracey A."/>
            <person name="Tromans A."/>
            <person name="Van Helmond Z."/>
            <person name="Wall M."/>
            <person name="Wallis J.M."/>
            <person name="White S."/>
            <person name="Whitehead S.L."/>
            <person name="Wilkinson J.E."/>
            <person name="Willey D.L."/>
            <person name="Williams H."/>
            <person name="Wilming L."/>
            <person name="Wray P.W."/>
            <person name="Wu Z."/>
            <person name="Coulson A."/>
            <person name="Vaudin M."/>
            <person name="Sulston J.E."/>
            <person name="Durbin R.M."/>
            <person name="Hubbard T."/>
            <person name="Wooster R."/>
            <person name="Dunham I."/>
            <person name="Carter N.P."/>
            <person name="McVean G."/>
            <person name="Ross M.T."/>
            <person name="Harrow J."/>
            <person name="Olson M.V."/>
            <person name="Beck S."/>
            <person name="Rogers J."/>
            <person name="Bentley D.R."/>
        </authorList>
    </citation>
    <scope>NUCLEOTIDE SEQUENCE [LARGE SCALE GENOMIC DNA]</scope>
</reference>
<reference key="9">
    <citation type="submission" date="2005-07" db="EMBL/GenBank/DDBJ databases">
        <authorList>
            <person name="Mural R.J."/>
            <person name="Istrail S."/>
            <person name="Sutton G.G."/>
            <person name="Florea L."/>
            <person name="Halpern A.L."/>
            <person name="Mobarry C.M."/>
            <person name="Lippert R."/>
            <person name="Walenz B."/>
            <person name="Shatkay H."/>
            <person name="Dew I."/>
            <person name="Miller J.R."/>
            <person name="Flanigan M.J."/>
            <person name="Edwards N.J."/>
            <person name="Bolanos R."/>
            <person name="Fasulo D."/>
            <person name="Halldorsson B.V."/>
            <person name="Hannenhalli S."/>
            <person name="Turner R."/>
            <person name="Yooseph S."/>
            <person name="Lu F."/>
            <person name="Nusskern D.R."/>
            <person name="Shue B.C."/>
            <person name="Zheng X.H."/>
            <person name="Zhong F."/>
            <person name="Delcher A.L."/>
            <person name="Huson D.H."/>
            <person name="Kravitz S.A."/>
            <person name="Mouchard L."/>
            <person name="Reinert K."/>
            <person name="Remington K.A."/>
            <person name="Clark A.G."/>
            <person name="Waterman M.S."/>
            <person name="Eichler E.E."/>
            <person name="Adams M.D."/>
            <person name="Hunkapiller M.W."/>
            <person name="Myers E.W."/>
            <person name="Venter J.C."/>
        </authorList>
    </citation>
    <scope>NUCLEOTIDE SEQUENCE [LARGE SCALE GENOMIC DNA]</scope>
</reference>
<reference key="10">
    <citation type="journal article" date="2004" name="Genome Res.">
        <title>The status, quality, and expansion of the NIH full-length cDNA project: the Mammalian Gene Collection (MGC).</title>
        <authorList>
            <consortium name="The MGC Project Team"/>
        </authorList>
    </citation>
    <scope>NUCLEOTIDE SEQUENCE [LARGE SCALE MRNA]</scope>
    <source>
        <tissue>Prostate</tissue>
    </source>
</reference>
<reference key="11">
    <citation type="journal article" date="1989" name="Biochem. Biophys. Res. Commun.">
        <title>The primary structure of a membrane-associated phospholipase A2 from human spleen.</title>
        <authorList>
            <person name="Kanda A."/>
            <person name="Ono T."/>
            <person name="Yoshida N."/>
            <person name="Tojo H."/>
            <person name="Okamoto M."/>
        </authorList>
    </citation>
    <scope>PROTEIN SEQUENCE OF 21-144</scope>
    <scope>SUBCELLULAR LOCATION</scope>
    <source>
        <tissue>Spleen</tissue>
    </source>
</reference>
<reference key="12">
    <citation type="journal article" date="1988" name="J. Biochem.">
        <title>Amino acid composition and NH2-terminal amino acid sequence of human phospholipase A2 purified from rheumatoid synovial fluid.</title>
        <authorList>
            <person name="Hara S."/>
            <person name="Kudo I."/>
            <person name="Matsuta K."/>
            <person name="Miyamoto T."/>
            <person name="Inoue K."/>
        </authorList>
    </citation>
    <scope>PROTEIN SEQUENCE OF 21-54</scope>
    <source>
        <tissue>Synovial fluid</tissue>
    </source>
</reference>
<reference key="13">
    <citation type="journal article" date="1988" name="Biochem. Biophys. Res. Commun.">
        <title>Phospholipase A2 from human synovial fluid: purification and structural homology to the placental enzyme.</title>
        <authorList>
            <person name="Lai C.Y."/>
            <person name="Wada K."/>
        </authorList>
    </citation>
    <scope>PROTEIN SEQUENCE OF 21-33</scope>
    <source>
        <tissue>Synovial fluid</tissue>
    </source>
</reference>
<reference key="14">
    <citation type="journal article" date="1993" name="Biochim. Biophys. Acta">
        <title>Purification and characterization of a phospholipase A2 from human ileal mucosa.</title>
        <authorList>
            <person name="Minami T."/>
            <person name="Tojo H."/>
            <person name="Shinomura Y."/>
            <person name="Matsuzawa Y."/>
            <person name="Okamoto M."/>
        </authorList>
    </citation>
    <scope>PROTEIN SEQUENCE OF 21-75</scope>
    <source>
        <tissue>Ileal mucosa</tissue>
    </source>
</reference>
<reference key="15">
    <citation type="journal article" date="1999" name="J. Biol. Chem.">
        <title>Cloning and characterization of novel mouse and human secretory phospholipase A2s.</title>
        <authorList>
            <person name="Ishizaki J."/>
            <person name="Suzuki N."/>
            <person name="Higashino K."/>
            <person name="Yokota Y."/>
            <person name="Ono T."/>
            <person name="Kawamoto K."/>
            <person name="Fujii N."/>
            <person name="Arita H."/>
            <person name="Hanasaki K."/>
        </authorList>
    </citation>
    <scope>FUNCTION</scope>
    <scope>CATALYTIC ACTIVITY</scope>
    <scope>TISSUE SPECIFICITY</scope>
</reference>
<reference key="16">
    <citation type="journal article" date="1999" name="J. Immunol.">
        <title>Protection by group II phospholipase A2 against Staphylococcus aureus.</title>
        <authorList>
            <person name="Laine V.J."/>
            <person name="Grass D.S."/>
            <person name="Nevalainen T.J."/>
        </authorList>
    </citation>
    <scope>FUNCTION</scope>
    <scope>CATALYTIC ACTIVITY</scope>
</reference>
<reference key="17">
    <citation type="journal article" date="2000" name="J. Biol. Chem.">
        <title>Structures, enzymatic properties, and expression of novel human and mouse secretory phospholipase A(2)s.</title>
        <authorList>
            <person name="Suzuki N."/>
            <person name="Ishizaki J."/>
            <person name="Yokota Y."/>
            <person name="Higashino K."/>
            <person name="Ono T."/>
            <person name="Ikeda M."/>
            <person name="Fujii N."/>
            <person name="Kawamoto K."/>
            <person name="Hanasaki K."/>
        </authorList>
    </citation>
    <scope>FUNCTION</scope>
    <scope>CATALYTIC ACTIVITY</scope>
    <scope>TISSUE SPECIFICITY</scope>
</reference>
<reference key="18">
    <citation type="journal article" date="2002" name="J. Biol. Chem.">
        <title>Bactericidal properties of human and murine groups I, II, V, X, and XII secreted phospholipases A(2).</title>
        <authorList>
            <person name="Koduri R.S."/>
            <person name="Groenroos J.O."/>
            <person name="Laine V.J."/>
            <person name="Le Calvez C."/>
            <person name="Lambeau G."/>
            <person name="Nevalainen T.J."/>
            <person name="Gelb M.H."/>
        </authorList>
    </citation>
    <scope>FUNCTION</scope>
    <scope>MUTAGENESIS OF ARG-27; LYS-30; LYS-35; LYS-57; LYS-72; ARG-73; ARG-77; LYS-87; LYS-99; ARG-104; LYS-122; LYS-127; LYS-128; LYS-135 AND ARG-138</scope>
</reference>
<reference key="19">
    <citation type="journal article" date="2004" name="Biochem. J.">
        <title>Biosynthesis of anandamide and N-palmitoylethanolamine by sequential actions of phospholipase A2 and lysophospholipase D.</title>
        <authorList>
            <person name="Sun Y.X."/>
            <person name="Tsuboi K."/>
            <person name="Okamoto Y."/>
            <person name="Tonai T."/>
            <person name="Murakami M."/>
            <person name="Kudo I."/>
            <person name="Ueda N."/>
        </authorList>
    </citation>
    <scope>FUNCTION</scope>
    <scope>CATALYTIC ACTIVITY</scope>
</reference>
<reference key="20">
    <citation type="journal article" date="2008" name="J. Biol. Chem.">
        <title>Pro-inflammatory secretory phospholipase A2 type IIA binds to integrins alphavbeta3 and alpha4beta1 and induces proliferation of monocytic cells in an integrin-dependent manner.</title>
        <authorList>
            <person name="Saegusa J."/>
            <person name="Akakura N."/>
            <person name="Wu C.Y."/>
            <person name="Hoogland C."/>
            <person name="Ma Z."/>
            <person name="Lam K.S."/>
            <person name="Liu F.T."/>
            <person name="Takada Y.K."/>
            <person name="Takada Y."/>
        </authorList>
    </citation>
    <scope>FUNCTION</scope>
    <scope>MUTAGENESIS OF ARG-62; HIS-67; ARG-73; ARG-94 AND ARG-120</scope>
</reference>
<reference key="21">
    <citation type="journal article" date="2013" name="Bioorg. Med. Chem. Lett.">
        <title>Identification of inhibitors against interaction between pro-inflammatory sPLA2-IIA protein and integrin alphavbeta3.</title>
        <authorList>
            <person name="Ye L."/>
            <person name="Dickerson T."/>
            <person name="Kaur H."/>
            <person name="Takada Y.K."/>
            <person name="Fujita M."/>
            <person name="Liu R."/>
            <person name="Knapp J.M."/>
            <person name="Lam K.S."/>
            <person name="Schore N.E."/>
            <person name="Kurth M.J."/>
            <person name="Takada Y."/>
        </authorList>
    </citation>
    <scope>INHIBITION OF INTEGRIN BINDING</scope>
</reference>
<reference key="22">
    <citation type="journal article" date="2014" name="Blood">
        <title>Platelets release mitochondria serving as substrate for bactericidal group IIA-secreted phospholipase A2 to promote inflammation.</title>
        <authorList>
            <person name="Boudreau L.H."/>
            <person name="Duchez A.C."/>
            <person name="Cloutier N."/>
            <person name="Soulet D."/>
            <person name="Martin N."/>
            <person name="Bollinger J."/>
            <person name="Pare A."/>
            <person name="Rousseau M."/>
            <person name="Naika G.S."/>
            <person name="Levesque T."/>
            <person name="Laflamme C."/>
            <person name="Marcoux G."/>
            <person name="Lambeau G."/>
            <person name="Farndale R.W."/>
            <person name="Pouliot M."/>
            <person name="Hamzeh-Cognasse H."/>
            <person name="Cognasse F."/>
            <person name="Garraud O."/>
            <person name="Nigrovic P.A."/>
            <person name="Guderley H."/>
            <person name="Lacroix S."/>
            <person name="Thibault L."/>
            <person name="Semple J.W."/>
            <person name="Gelb M.H."/>
            <person name="Boilard E."/>
        </authorList>
    </citation>
    <scope>FUNCTION</scope>
    <scope>TISSUE SPECIFICITY</scope>
    <scope>SUBCELLULAR LOCATION</scope>
    <scope>MUTAGENESIS OF HIS-67</scope>
</reference>
<reference key="23">
    <citation type="journal article" date="2015" name="J. Biol. Chem.">
        <title>Proinflammatory secreted phospholipase A2 type IIA (sPLA-IIA) induces integrin activation through direct binding to a newly identified binding site (site 2) in integrins alphavbeta3, alpha4beta1, and alpha5beta1.</title>
        <authorList>
            <person name="Fujita M."/>
            <person name="Zhu K."/>
            <person name="Fujita C.K."/>
            <person name="Zhao M."/>
            <person name="Lam K.S."/>
            <person name="Kurth M.J."/>
            <person name="Takada Y.K."/>
            <person name="Takada Y."/>
        </authorList>
    </citation>
    <scope>FUNCTION</scope>
    <scope>MUTAGENESIS OF GLY-49; HIS-67; ASP-68; ARG-94 AND ARG-120</scope>
</reference>
<reference key="24">
    <citation type="journal article" date="1991" name="Nature">
        <title>Structure of recombinant human rheumatoid arthritic synovial fluid phospholipase A2 at 2.2-A resolution.</title>
        <authorList>
            <person name="Wery J.-P."/>
            <person name="Schevitz R.W."/>
            <person name="Clawson D.K."/>
            <person name="Bobbitt J.L."/>
            <person name="Dow E.R."/>
            <person name="Gamboa G."/>
            <person name="Goodson T. Jr."/>
            <person name="Hermann R.B."/>
            <person name="Kramer R.M."/>
            <person name="McClure D.B."/>
            <person name="Mihelich E.D."/>
            <person name="Putnam J.E."/>
            <person name="Sharp J.D."/>
            <person name="Stark D.H."/>
            <person name="Teater C."/>
            <person name="Warrick M.W."/>
            <person name="Jones N.D."/>
        </authorList>
    </citation>
    <scope>X-RAY CRYSTALLOGRAPHY (2.2 ANGSTROMS) OF 21-144</scope>
    <scope>DISULFIDE BOND</scope>
</reference>
<reference key="25">
    <citation type="journal article" date="1991" name="Science">
        <title>Structures of free and inhibited human secretory phospholipase A2 from inflammatory exudate.</title>
        <authorList>
            <person name="Scott D.L."/>
            <person name="White S.P."/>
            <person name="Browning J.L."/>
            <person name="Rosa J.J."/>
            <person name="Gelb M.H."/>
            <person name="Sigler P.B."/>
        </authorList>
    </citation>
    <scope>X-RAY CRYSTALLOGRAPHY (2.1 ANGSTROMS) OF 21-144 IN COMPLEX WITH CALCIUM</scope>
    <scope>DISULFIDE BOND</scope>
</reference>
<reference key="26">
    <citation type="journal article" date="1995" name="Nat. Struct. Biol.">
        <title>Structure-based design of the first potent and selective inhibitor of human non-pancreatic secretory phospholipase A2.</title>
        <authorList>
            <person name="Schevitz R.W."/>
            <person name="Bach N.J."/>
            <person name="Carlson D.G."/>
            <person name="Chirgadze N.Y."/>
            <person name="Clawson D.K."/>
            <person name="Dillard R.D."/>
            <person name="Draheim S.E."/>
            <person name="Hartley L.W."/>
            <person name="Jones N.D."/>
            <person name="Mihelich E.D."/>
            <person name="Olkowski J.L."/>
            <person name="Snyder D.W."/>
            <person name="Dand S.C."/>
            <person name="Wery J.-P."/>
        </authorList>
    </citation>
    <scope>X-RAY CRYSTALLOGRAPHY (2.20 ANGSTROMS) OF 21-144 IN COMPLEX WITH CALCIUM</scope>
    <scope>DISULFIDE BOND</scope>
</reference>
<reference key="27">
    <citation type="journal article" date="1998" name="J. Biochem.">
        <title>Crystal structure of human secretory phospholipase A2-IIA complex with the potent indolizine inhibitor 120-1032.</title>
        <authorList>
            <person name="Kitadokoro K."/>
            <person name="Hagishita S."/>
            <person name="Sato T."/>
            <person name="Ohtan M."/>
            <person name="Miki K."/>
        </authorList>
    </citation>
    <scope>X-RAY CRYSTALLOGRAPHY (2.2 ANGSTROMS)</scope>
    <scope>DISULFIDE BOND</scope>
</reference>
<feature type="signal peptide" evidence="16 18 19 20 22">
    <location>
        <begin position="1"/>
        <end position="20"/>
    </location>
</feature>
<feature type="chain" id="PRO_0000022750" description="Phospholipase A2, membrane associated">
    <location>
        <begin position="21"/>
        <end position="144"/>
    </location>
</feature>
<feature type="active site" evidence="1">
    <location>
        <position position="67"/>
    </location>
</feature>
<feature type="active site" evidence="1">
    <location>
        <position position="111"/>
    </location>
</feature>
<feature type="binding site" evidence="11 21 31 32 33 35">
    <location>
        <position position="47"/>
    </location>
    <ligand>
        <name>Ca(2+)</name>
        <dbReference type="ChEBI" id="CHEBI:29108"/>
    </ligand>
</feature>
<feature type="binding site" evidence="11 21 31 32 33 35">
    <location>
        <position position="49"/>
    </location>
    <ligand>
        <name>Ca(2+)</name>
        <dbReference type="ChEBI" id="CHEBI:29108"/>
    </ligand>
</feature>
<feature type="binding site" evidence="11 21 31 32 33 35">
    <location>
        <position position="51"/>
    </location>
    <ligand>
        <name>Ca(2+)</name>
        <dbReference type="ChEBI" id="CHEBI:29108"/>
    </ligand>
</feature>
<feature type="binding site" evidence="11 21 31 32 33 35">
    <location>
        <position position="68"/>
    </location>
    <ligand>
        <name>Ca(2+)</name>
        <dbReference type="ChEBI" id="CHEBI:29108"/>
    </ligand>
</feature>
<feature type="site" description="Important for integrin binding" evidence="10">
    <location>
        <position position="94"/>
    </location>
</feature>
<feature type="site" description="Important for integrin binding" evidence="10">
    <location>
        <position position="120"/>
    </location>
</feature>
<feature type="disulfide bond" evidence="11 12 21 23 30 31 32 33 34 35">
    <location>
        <begin position="46"/>
        <end position="137"/>
    </location>
</feature>
<feature type="disulfide bond" evidence="11 12 21 23 30 31 32 33 34 35">
    <location>
        <begin position="48"/>
        <end position="64"/>
    </location>
</feature>
<feature type="disulfide bond" evidence="11 12 21 23 30 31 32 33 34 35">
    <location>
        <begin position="63"/>
        <end position="117"/>
    </location>
</feature>
<feature type="disulfide bond" evidence="11 12 21 23 30 31 32 33 34 35">
    <location>
        <begin position="69"/>
        <end position="144"/>
    </location>
</feature>
<feature type="disulfide bond" evidence="11 12 21 23 30 31 32 33 34 35">
    <location>
        <begin position="70"/>
        <end position="110"/>
    </location>
</feature>
<feature type="disulfide bond" evidence="11 12 21 23 30 31 32 33 34 35">
    <location>
        <begin position="79"/>
        <end position="103"/>
    </location>
</feature>
<feature type="disulfide bond" evidence="11 12 21 23 30 31 32 33 34 35">
    <location>
        <begin position="97"/>
        <end position="108"/>
    </location>
</feature>
<feature type="sequence variant" id="VAR_018953" description="In dbSNP:rs11573162." evidence="24">
    <original>H</original>
    <variation>Y</variation>
    <location>
        <position position="19"/>
    </location>
</feature>
<feature type="mutagenesis site" description="Reduces bactericidal activity to 20% against B.subtilis and to 4% against S.aureus. Complete loss of bactericidal activity; when associated with E-30 and E-35." evidence="8">
    <original>R</original>
    <variation>E</variation>
    <location>
        <position position="27"/>
    </location>
</feature>
<feature type="mutagenesis site" description="Complete loss of bactericidal activity; when associated with E-27 and E-35." evidence="8">
    <original>K</original>
    <variation>E</variation>
    <location>
        <position position="30"/>
    </location>
</feature>
<feature type="mutagenesis site" description="Complete loss of bactericidal activity; when associated with E-27 and E-30." evidence="8">
    <original>K</original>
    <variation>E</variation>
    <location>
        <position position="35"/>
    </location>
</feature>
<feature type="mutagenesis site" description="No effect on integrin binding; when associated with K-68." evidence="15">
    <original>G</original>
    <variation>S</variation>
    <location>
        <position position="49"/>
    </location>
</feature>
<feature type="mutagenesis site" description="Impairs bactericidal activity; when associated with E-128." evidence="8">
    <original>K</original>
    <variation>E</variation>
    <location>
        <position position="57"/>
    </location>
</feature>
<feature type="mutagenesis site" description="No effect on integrin binding." evidence="10">
    <original>R</original>
    <variation>E</variation>
    <location>
        <position position="62"/>
    </location>
</feature>
<feature type="mutagenesis site" description="Catalytically inactive but does not affect integrin binding. Impairs leukotriene B4 synthesis in activated neutrophils." evidence="10 14 15">
    <original>H</original>
    <variation>Q</variation>
    <location>
        <position position="67"/>
    </location>
</feature>
<feature type="mutagenesis site" description="No effect on integrin binding; when associated with S-49." evidence="15">
    <original>D</original>
    <variation>K</variation>
    <location>
        <position position="68"/>
    </location>
</feature>
<feature type="mutagenesis site" description="Impairs bactericidal activity; when associated with E-73 and E-77." evidence="8">
    <original>K</original>
    <variation>E</variation>
    <location>
        <position position="72"/>
    </location>
</feature>
<feature type="mutagenesis site" description="Impairs bactericidal activity; when associated with E-72 and E-77." evidence="8">
    <original>R</original>
    <variation>E</variation>
    <location>
        <position position="73"/>
    </location>
</feature>
<feature type="mutagenesis site" description="Slightly reduced integrin binding." evidence="10">
    <original>R</original>
    <variation>E</variation>
    <location>
        <position position="73"/>
    </location>
</feature>
<feature type="mutagenesis site" description="Impairs bactericidal activity; when associated with E-72 and E-73." evidence="8">
    <original>R</original>
    <variation>E</variation>
    <location>
        <position position="77"/>
    </location>
</feature>
<feature type="mutagenesis site" description="Reduces bactericidal activity to 20% against B.subtilis and to 10% against S.aureus. Complete loss of bactericidal activity; when associated with E-99 and E-104." evidence="8">
    <original>K</original>
    <variation>E</variation>
    <location>
        <position position="87"/>
    </location>
</feature>
<feature type="mutagenesis site" description="Moderately reduced integrin binding. Greatly reduced integrin binding but no effect on catalytic activity; when associated with E-120." evidence="10 15">
    <original>R</original>
    <variation>E</variation>
    <location>
        <position position="94"/>
    </location>
</feature>
<feature type="mutagenesis site" description="Reduces bactericidal activity to 25% against B.subtilis and to 10% against S.aureus. Complete loss of bactericidal activity; when associated with E-87 and E-104." evidence="8">
    <original>K</original>
    <variation>E</variation>
    <location>
        <position position="99"/>
    </location>
</feature>
<feature type="mutagenesis site" description="Reduces bactericidal activity to 18% against B.subtilis and to 12% against S.aureus. Complete loss of bactericidal activity; when associated with E-87 and E-99." evidence="8">
    <original>R</original>
    <variation>E</variation>
    <location>
        <position position="104"/>
    </location>
</feature>
<feature type="mutagenesis site" description="Moderately reduced integrin binding. Greatly reduced integrin binding but no effect on catalytic activity; when associated with E-94." evidence="10 15">
    <original>R</original>
    <variation>E</variation>
    <location>
        <position position="120"/>
    </location>
</feature>
<feature type="mutagenesis site" description="Impairs bactericidal activity; when associated with E-127." evidence="8">
    <original>K</original>
    <variation>E</variation>
    <location>
        <position position="122"/>
    </location>
</feature>
<feature type="mutagenesis site" description="Impairs bactericidal activity; when associated with E-122." evidence="8">
    <original>K</original>
    <variation>E</variation>
    <location>
        <position position="127"/>
    </location>
</feature>
<feature type="mutagenesis site" description="Impairs bactericidal activity; when associated with E-57." evidence="8">
    <original>K</original>
    <variation>E</variation>
    <location>
        <position position="128"/>
    </location>
</feature>
<feature type="mutagenesis site" description="Impairs bactericidal activity; when associated with D-138." evidence="8">
    <original>K</original>
    <variation>E</variation>
    <location>
        <position position="135"/>
    </location>
</feature>
<feature type="mutagenesis site" description="Impairs bactericidal activity; when associated with E-135." evidence="8">
    <original>R</original>
    <variation>D</variation>
    <location>
        <position position="138"/>
    </location>
</feature>
<feature type="sequence conflict" description="In Ref. 4; AAT73043." evidence="25" ref="4">
    <original>I</original>
    <variation>Y</variation>
    <location>
        <position position="12"/>
    </location>
</feature>
<feature type="helix" evidence="37">
    <location>
        <begin position="22"/>
        <end position="33"/>
    </location>
</feature>
<feature type="helix" evidence="37">
    <location>
        <begin position="37"/>
        <end position="40"/>
    </location>
</feature>
<feature type="turn" evidence="37">
    <location>
        <begin position="41"/>
        <end position="43"/>
    </location>
</feature>
<feature type="turn" evidence="37">
    <location>
        <begin position="45"/>
        <end position="47"/>
    </location>
</feature>
<feature type="strand" evidence="37">
    <location>
        <begin position="48"/>
        <end position="50"/>
    </location>
</feature>
<feature type="helix" evidence="37">
    <location>
        <begin position="59"/>
        <end position="66"/>
    </location>
</feature>
<feature type="helix" evidence="37">
    <location>
        <begin position="69"/>
        <end position="76"/>
    </location>
</feature>
<feature type="strand" evidence="36">
    <location>
        <begin position="81"/>
        <end position="83"/>
    </location>
</feature>
<feature type="strand" evidence="37">
    <location>
        <begin position="88"/>
        <end position="91"/>
    </location>
</feature>
<feature type="strand" evidence="37">
    <location>
        <begin position="94"/>
        <end position="97"/>
    </location>
</feature>
<feature type="helix" evidence="37">
    <location>
        <begin position="102"/>
        <end position="120"/>
    </location>
</feature>
<feature type="helix" evidence="37">
    <location>
        <begin position="122"/>
        <end position="124"/>
    </location>
</feature>
<feature type="helix" evidence="37">
    <location>
        <begin position="127"/>
        <end position="129"/>
    </location>
</feature>
<feature type="helix" evidence="37">
    <location>
        <begin position="134"/>
        <end position="136"/>
    </location>
</feature>
<dbReference type="EC" id="3.1.1.4" evidence="6 7 18"/>
<dbReference type="EMBL" id="M22430">
    <property type="protein sequence ID" value="AAA36550.1"/>
    <property type="molecule type" value="mRNA"/>
</dbReference>
<dbReference type="EMBL" id="M22431">
    <property type="protein sequence ID" value="AAA36549.1"/>
    <property type="molecule type" value="Genomic_DNA"/>
</dbReference>
<dbReference type="EMBL" id="AY656695">
    <property type="protein sequence ID" value="AAT73043.1"/>
    <property type="molecule type" value="mRNA"/>
</dbReference>
<dbReference type="EMBL" id="CR456865">
    <property type="protein sequence ID" value="CAG33146.1"/>
    <property type="molecule type" value="mRNA"/>
</dbReference>
<dbReference type="EMBL" id="AY462114">
    <property type="protein sequence ID" value="AAR16084.1"/>
    <property type="molecule type" value="Genomic_DNA"/>
</dbReference>
<dbReference type="EMBL" id="AL358253">
    <property type="status" value="NOT_ANNOTATED_CDS"/>
    <property type="molecule type" value="Genomic_DNA"/>
</dbReference>
<dbReference type="EMBL" id="AK291302">
    <property type="protein sequence ID" value="BAF83991.1"/>
    <property type="molecule type" value="mRNA"/>
</dbReference>
<dbReference type="EMBL" id="CH471134">
    <property type="protein sequence ID" value="EAW94907.1"/>
    <property type="molecule type" value="Genomic_DNA"/>
</dbReference>
<dbReference type="EMBL" id="BC005919">
    <property type="protein sequence ID" value="AAH05919.1"/>
    <property type="molecule type" value="mRNA"/>
</dbReference>
<dbReference type="CCDS" id="CCDS201.1"/>
<dbReference type="PIR" id="A32862">
    <property type="entry name" value="PSHUYF"/>
</dbReference>
<dbReference type="RefSeq" id="NP_000291.1">
    <property type="nucleotide sequence ID" value="NM_000300.4"/>
</dbReference>
<dbReference type="RefSeq" id="NP_001155199.1">
    <property type="nucleotide sequence ID" value="NM_001161727.2"/>
</dbReference>
<dbReference type="RefSeq" id="NP_001155200.1">
    <property type="nucleotide sequence ID" value="NM_001161728.2"/>
</dbReference>
<dbReference type="RefSeq" id="NP_001155201.1">
    <property type="nucleotide sequence ID" value="NM_001161729.1"/>
</dbReference>
<dbReference type="RefSeq" id="NP_001382392.1">
    <property type="nucleotide sequence ID" value="NM_001395463.1"/>
</dbReference>
<dbReference type="RefSeq" id="XP_047278549.1">
    <property type="nucleotide sequence ID" value="XM_047422593.1"/>
</dbReference>
<dbReference type="RefSeq" id="XP_047278550.1">
    <property type="nucleotide sequence ID" value="XM_047422594.1"/>
</dbReference>
<dbReference type="RefSeq" id="XP_047278551.1">
    <property type="nucleotide sequence ID" value="XM_047422595.1"/>
</dbReference>
<dbReference type="RefSeq" id="XP_054193052.1">
    <property type="nucleotide sequence ID" value="XM_054337077.1"/>
</dbReference>
<dbReference type="RefSeq" id="XP_054193053.1">
    <property type="nucleotide sequence ID" value="XM_054337078.1"/>
</dbReference>
<dbReference type="RefSeq" id="XP_054193054.1">
    <property type="nucleotide sequence ID" value="XM_054337079.1"/>
</dbReference>
<dbReference type="PDB" id="1AYP">
    <property type="method" value="X-ray"/>
    <property type="resolution" value="2.57 A"/>
    <property type="chains" value="A/B/C/D/E/F=21-144"/>
</dbReference>
<dbReference type="PDB" id="1BBC">
    <property type="method" value="X-ray"/>
    <property type="resolution" value="2.20 A"/>
    <property type="chains" value="A=21-144"/>
</dbReference>
<dbReference type="PDB" id="1DB4">
    <property type="method" value="X-ray"/>
    <property type="resolution" value="2.20 A"/>
    <property type="chains" value="A=21-144"/>
</dbReference>
<dbReference type="PDB" id="1DB5">
    <property type="method" value="X-ray"/>
    <property type="resolution" value="2.80 A"/>
    <property type="chains" value="A=21-144"/>
</dbReference>
<dbReference type="PDB" id="1DCY">
    <property type="method" value="X-ray"/>
    <property type="resolution" value="2.70 A"/>
    <property type="chains" value="A=21-144"/>
</dbReference>
<dbReference type="PDB" id="1J1A">
    <property type="method" value="X-ray"/>
    <property type="resolution" value="2.20 A"/>
    <property type="chains" value="A/B=21-144"/>
</dbReference>
<dbReference type="PDB" id="1KQU">
    <property type="method" value="X-ray"/>
    <property type="resolution" value="2.10 A"/>
    <property type="chains" value="A=21-144"/>
</dbReference>
<dbReference type="PDB" id="1KVO">
    <property type="method" value="X-ray"/>
    <property type="resolution" value="2.00 A"/>
    <property type="chains" value="A/B/C/D/E/F=21-144"/>
</dbReference>
<dbReference type="PDB" id="1N28">
    <property type="method" value="X-ray"/>
    <property type="resolution" value="1.50 A"/>
    <property type="chains" value="A/B=21-144"/>
</dbReference>
<dbReference type="PDB" id="1N29">
    <property type="method" value="X-ray"/>
    <property type="resolution" value="2.60 A"/>
    <property type="chains" value="A=21-144"/>
</dbReference>
<dbReference type="PDB" id="1POD">
    <property type="method" value="X-ray"/>
    <property type="resolution" value="2.10 A"/>
    <property type="chains" value="A=21-144"/>
</dbReference>
<dbReference type="PDB" id="1POE">
    <property type="method" value="X-ray"/>
    <property type="resolution" value="2.10 A"/>
    <property type="chains" value="A/B=21-144"/>
</dbReference>
<dbReference type="PDB" id="3U8B">
    <property type="method" value="X-ray"/>
    <property type="resolution" value="2.30 A"/>
    <property type="chains" value="A=21-144"/>
</dbReference>
<dbReference type="PDB" id="3U8D">
    <property type="method" value="X-ray"/>
    <property type="resolution" value="1.80 A"/>
    <property type="chains" value="A/B=21-144"/>
</dbReference>
<dbReference type="PDB" id="3U8H">
    <property type="method" value="X-ray"/>
    <property type="resolution" value="2.30 A"/>
    <property type="chains" value="A/B=21-144"/>
</dbReference>
<dbReference type="PDB" id="3U8I">
    <property type="method" value="X-ray"/>
    <property type="resolution" value="1.10 A"/>
    <property type="chains" value="A/B=21-144"/>
</dbReference>
<dbReference type="PDB" id="5G3N">
    <property type="method" value="X-ray"/>
    <property type="resolution" value="1.80 A"/>
    <property type="chains" value="A/B=21-144"/>
</dbReference>
<dbReference type="PDBsum" id="1AYP"/>
<dbReference type="PDBsum" id="1BBC"/>
<dbReference type="PDBsum" id="1DB4"/>
<dbReference type="PDBsum" id="1DB5"/>
<dbReference type="PDBsum" id="1DCY"/>
<dbReference type="PDBsum" id="1J1A"/>
<dbReference type="PDBsum" id="1KQU"/>
<dbReference type="PDBsum" id="1KVO"/>
<dbReference type="PDBsum" id="1N28"/>
<dbReference type="PDBsum" id="1N29"/>
<dbReference type="PDBsum" id="1POD"/>
<dbReference type="PDBsum" id="1POE"/>
<dbReference type="PDBsum" id="3U8B"/>
<dbReference type="PDBsum" id="3U8D"/>
<dbReference type="PDBsum" id="3U8H"/>
<dbReference type="PDBsum" id="3U8I"/>
<dbReference type="PDBsum" id="5G3N"/>
<dbReference type="SMR" id="P14555"/>
<dbReference type="BioGRID" id="111337">
    <property type="interactions" value="31"/>
</dbReference>
<dbReference type="FunCoup" id="P14555">
    <property type="interactions" value="502"/>
</dbReference>
<dbReference type="IntAct" id="P14555">
    <property type="interactions" value="7"/>
</dbReference>
<dbReference type="MINT" id="P14555"/>
<dbReference type="STRING" id="9606.ENSP00000383364"/>
<dbReference type="BindingDB" id="P14555"/>
<dbReference type="ChEMBL" id="CHEMBL3474"/>
<dbReference type="DrugBank" id="DB03121">
    <property type="generic name" value="(1-Benzyl-5-methoxy-2-methyl-1H-indol-3-yl)acetic acid"/>
</dbReference>
<dbReference type="DrugBank" id="DB04112">
    <property type="generic name" value="(2R)-2-Acetamido-3-(octadecyloxy)propyl 2-(methylsulfanyl)ethyl hydrogen phosphate"/>
</dbReference>
<dbReference type="DrugBank" id="DB01955">
    <property type="generic name" value="1,4-Butanediol"/>
</dbReference>
<dbReference type="DrugBank" id="DB02080">
    <property type="generic name" value="1-{2-[2-(2-Methoxyethoxy)Ethoxy]Ethoxy}-4-(1,1,3,3-Tetramethylbutyl)Benzene"/>
</dbReference>
<dbReference type="DrugBank" id="DB02936">
    <property type="generic name" value="4-(1-Benzyl-3-Carbamoylmethyl-2-Methyl-1h-Indol-5-Yloxy)-Butyric Acid"/>
</dbReference>
<dbReference type="DrugBank" id="DB03471">
    <property type="generic name" value="6-phenyl-4(R)-(7-phenyl-heptanoylamino)-hexanoic acid"/>
</dbReference>
<dbReference type="DrugBank" id="DB02504">
    <property type="generic name" value="[3-(1-Benzyl-3-Carbamoylmethyl-2-Methyl-1h-Indol-5-Yloxy)-Propyl-]-Phosphonic Acid"/>
</dbReference>
<dbReference type="DrugBank" id="DB00586">
    <property type="generic name" value="Diclofenac"/>
</dbReference>
<dbReference type="DrugBank" id="DB03784">
    <property type="generic name" value="Elaidamide"/>
</dbReference>
<dbReference type="DrugBank" id="DB01381">
    <property type="generic name" value="Ginkgo biloba"/>
</dbReference>
<dbReference type="DrugBank" id="DB00328">
    <property type="generic name" value="Indomethacin"/>
</dbReference>
<dbReference type="DrugBank" id="DB02325">
    <property type="generic name" value="Isopropyl alcohol"/>
</dbReference>
<dbReference type="DrugBank" id="DB04287">
    <property type="generic name" value="KH064"/>
</dbReference>
<dbReference type="DrugBank" id="DB03017">
    <property type="generic name" value="Lauric acid"/>
</dbReference>
<dbReference type="DrugBank" id="DB02448">
    <property type="generic name" value="N-Tridecanoic Acid"/>
</dbReference>
<dbReference type="DrugBank" id="DB04786">
    <property type="generic name" value="Suramin"/>
</dbReference>
<dbReference type="DrugBank" id="DB05737">
    <property type="generic name" value="Varespladib methyl"/>
</dbReference>
<dbReference type="GuidetoPHARMACOLOGY" id="1417"/>
<dbReference type="SwissLipids" id="SLP:000000653"/>
<dbReference type="GlyGen" id="P14555">
    <property type="glycosylation" value="1 site, 1 O-linked glycan (1 site)"/>
</dbReference>
<dbReference type="iPTMnet" id="P14555"/>
<dbReference type="PhosphoSitePlus" id="P14555"/>
<dbReference type="BioMuta" id="PLA2G2A"/>
<dbReference type="DMDM" id="129483"/>
<dbReference type="jPOST" id="P14555"/>
<dbReference type="MassIVE" id="P14555"/>
<dbReference type="PaxDb" id="9606-ENSP00000383364"/>
<dbReference type="PeptideAtlas" id="P14555"/>
<dbReference type="ProteomicsDB" id="53059"/>
<dbReference type="Pumba" id="P14555"/>
<dbReference type="Antibodypedia" id="29745">
    <property type="antibodies" value="285 antibodies from 30 providers"/>
</dbReference>
<dbReference type="DNASU" id="5320"/>
<dbReference type="Ensembl" id="ENST00000375111.7">
    <property type="protein sequence ID" value="ENSP00000364252.3"/>
    <property type="gene ID" value="ENSG00000188257.12"/>
</dbReference>
<dbReference type="Ensembl" id="ENST00000400520.8">
    <property type="protein sequence ID" value="ENSP00000383364.3"/>
    <property type="gene ID" value="ENSG00000188257.12"/>
</dbReference>
<dbReference type="Ensembl" id="ENST00000482011.3">
    <property type="protein sequence ID" value="ENSP00000504762.1"/>
    <property type="gene ID" value="ENSG00000188257.12"/>
</dbReference>
<dbReference type="GeneID" id="5320"/>
<dbReference type="KEGG" id="hsa:5320"/>
<dbReference type="MANE-Select" id="ENST00000482011.3">
    <property type="protein sequence ID" value="ENSP00000504762.1"/>
    <property type="RefSeq nucleotide sequence ID" value="NM_001395463.1"/>
    <property type="RefSeq protein sequence ID" value="NP_001382392.1"/>
</dbReference>
<dbReference type="UCSC" id="uc001bcv.4">
    <property type="organism name" value="human"/>
</dbReference>
<dbReference type="AGR" id="HGNC:9031"/>
<dbReference type="CTD" id="5320"/>
<dbReference type="DisGeNET" id="5320"/>
<dbReference type="GeneCards" id="PLA2G2A"/>
<dbReference type="HGNC" id="HGNC:9031">
    <property type="gene designation" value="PLA2G2A"/>
</dbReference>
<dbReference type="HPA" id="ENSG00000188257">
    <property type="expression patterns" value="Group enriched (adipose tissue, intestine, placenta, urinary bladder)"/>
</dbReference>
<dbReference type="MalaCards" id="PLA2G2A"/>
<dbReference type="MIM" id="172411">
    <property type="type" value="gene"/>
</dbReference>
<dbReference type="neXtProt" id="NX_P14555"/>
<dbReference type="OpenTargets" id="ENSG00000188257"/>
<dbReference type="PharmGKB" id="PA270"/>
<dbReference type="VEuPathDB" id="HostDB:ENSG00000188257"/>
<dbReference type="eggNOG" id="KOG4087">
    <property type="taxonomic scope" value="Eukaryota"/>
</dbReference>
<dbReference type="GeneTree" id="ENSGT00940000155096"/>
<dbReference type="HOGENOM" id="CLU_090683_3_0_1"/>
<dbReference type="InParanoid" id="P14555"/>
<dbReference type="OMA" id="GDQDYCK"/>
<dbReference type="OrthoDB" id="5841574at2759"/>
<dbReference type="PAN-GO" id="P14555">
    <property type="GO annotations" value="4 GO annotations based on evolutionary models"/>
</dbReference>
<dbReference type="PhylomeDB" id="P14555"/>
<dbReference type="TreeFam" id="TF319283"/>
<dbReference type="BRENDA" id="3.1.1.4">
    <property type="organism ID" value="2681"/>
</dbReference>
<dbReference type="PathwayCommons" id="P14555"/>
<dbReference type="Reactome" id="R-HSA-1482788">
    <property type="pathway name" value="Acyl chain remodelling of PC"/>
</dbReference>
<dbReference type="Reactome" id="R-HSA-1482801">
    <property type="pathway name" value="Acyl chain remodelling of PS"/>
</dbReference>
<dbReference type="Reactome" id="R-HSA-1482839">
    <property type="pathway name" value="Acyl chain remodelling of PE"/>
</dbReference>
<dbReference type="Reactome" id="R-HSA-1482922">
    <property type="pathway name" value="Acyl chain remodelling of PI"/>
</dbReference>
<dbReference type="Reactome" id="R-HSA-1482925">
    <property type="pathway name" value="Acyl chain remodelling of PG"/>
</dbReference>
<dbReference type="Reactome" id="R-HSA-1483166">
    <property type="pathway name" value="Synthesis of PA"/>
</dbReference>
<dbReference type="Reactome" id="R-HSA-6803157">
    <property type="pathway name" value="Antimicrobial peptides"/>
</dbReference>
<dbReference type="SABIO-RK" id="P14555"/>
<dbReference type="SignaLink" id="P14555"/>
<dbReference type="BioGRID-ORCS" id="5320">
    <property type="hits" value="7 hits in 1153 CRISPR screens"/>
</dbReference>
<dbReference type="ChiTaRS" id="PLA2G2A">
    <property type="organism name" value="human"/>
</dbReference>
<dbReference type="EvolutionaryTrace" id="P14555"/>
<dbReference type="GeneWiki" id="PLA2G2A"/>
<dbReference type="GenomeRNAi" id="5320"/>
<dbReference type="Pharos" id="P14555">
    <property type="development level" value="Tchem"/>
</dbReference>
<dbReference type="PRO" id="PR:P14555"/>
<dbReference type="Proteomes" id="UP000005640">
    <property type="component" value="Chromosome 1"/>
</dbReference>
<dbReference type="RNAct" id="P14555">
    <property type="molecule type" value="protein"/>
</dbReference>
<dbReference type="Bgee" id="ENSG00000188257">
    <property type="expression patterns" value="Expressed in palpebral conjunctiva and 149 other cell types or tissues"/>
</dbReference>
<dbReference type="ExpressionAtlas" id="P14555">
    <property type="expression patterns" value="baseline and differential"/>
</dbReference>
<dbReference type="GO" id="GO:0005783">
    <property type="term" value="C:endoplasmic reticulum"/>
    <property type="evidence" value="ECO:0000314"/>
    <property type="project" value="LIFEdb"/>
</dbReference>
<dbReference type="GO" id="GO:0005789">
    <property type="term" value="C:endoplasmic reticulum membrane"/>
    <property type="evidence" value="ECO:0000304"/>
    <property type="project" value="Reactome"/>
</dbReference>
<dbReference type="GO" id="GO:0070062">
    <property type="term" value="C:extracellular exosome"/>
    <property type="evidence" value="ECO:0007005"/>
    <property type="project" value="UniProtKB"/>
</dbReference>
<dbReference type="GO" id="GO:0005576">
    <property type="term" value="C:extracellular region"/>
    <property type="evidence" value="ECO:0000304"/>
    <property type="project" value="Reactome"/>
</dbReference>
<dbReference type="GO" id="GO:0005615">
    <property type="term" value="C:extracellular space"/>
    <property type="evidence" value="ECO:0000314"/>
    <property type="project" value="BHF-UCL"/>
</dbReference>
<dbReference type="GO" id="GO:0005741">
    <property type="term" value="C:mitochondrial outer membrane"/>
    <property type="evidence" value="ECO:0007669"/>
    <property type="project" value="UniProtKB-SubCell"/>
</dbReference>
<dbReference type="GO" id="GO:0048471">
    <property type="term" value="C:perinuclear region of cytoplasm"/>
    <property type="evidence" value="ECO:0007669"/>
    <property type="project" value="Ensembl"/>
</dbReference>
<dbReference type="GO" id="GO:0005886">
    <property type="term" value="C:plasma membrane"/>
    <property type="evidence" value="ECO:0007669"/>
    <property type="project" value="UniProtKB-SubCell"/>
</dbReference>
<dbReference type="GO" id="GO:0030141">
    <property type="term" value="C:secretory granule"/>
    <property type="evidence" value="ECO:0007669"/>
    <property type="project" value="Ensembl"/>
</dbReference>
<dbReference type="GO" id="GO:0005509">
    <property type="term" value="F:calcium ion binding"/>
    <property type="evidence" value="ECO:0000318"/>
    <property type="project" value="GO_Central"/>
</dbReference>
<dbReference type="GO" id="GO:0047498">
    <property type="term" value="F:calcium-dependent phospholipase A2 activity"/>
    <property type="evidence" value="ECO:0000314"/>
    <property type="project" value="UniProtKB"/>
</dbReference>
<dbReference type="GO" id="GO:0004623">
    <property type="term" value="F:phospholipase A2 activity"/>
    <property type="evidence" value="ECO:0000314"/>
    <property type="project" value="BHF-UCL"/>
</dbReference>
<dbReference type="GO" id="GO:0005543">
    <property type="term" value="F:phospholipid binding"/>
    <property type="evidence" value="ECO:0000314"/>
    <property type="project" value="BHF-UCL"/>
</dbReference>
<dbReference type="GO" id="GO:0038166">
    <property type="term" value="P:angiotensin-activated signaling pathway"/>
    <property type="evidence" value="ECO:0000314"/>
    <property type="project" value="BHF-UCL"/>
</dbReference>
<dbReference type="GO" id="GO:0050482">
    <property type="term" value="P:arachidonate secretion"/>
    <property type="evidence" value="ECO:0007669"/>
    <property type="project" value="InterPro"/>
</dbReference>
<dbReference type="GO" id="GO:0050830">
    <property type="term" value="P:defense response to Gram-positive bacterium"/>
    <property type="evidence" value="ECO:0000315"/>
    <property type="project" value="UniProtKB"/>
</dbReference>
<dbReference type="GO" id="GO:0006954">
    <property type="term" value="P:inflammatory response"/>
    <property type="evidence" value="ECO:0007669"/>
    <property type="project" value="UniProtKB-KW"/>
</dbReference>
<dbReference type="GO" id="GO:0036335">
    <property type="term" value="P:intestinal stem cell homeostasis"/>
    <property type="evidence" value="ECO:0000250"/>
    <property type="project" value="UniProtKB"/>
</dbReference>
<dbReference type="GO" id="GO:0031640">
    <property type="term" value="P:killing of cells of another organism"/>
    <property type="evidence" value="ECO:0007669"/>
    <property type="project" value="UniProtKB-KW"/>
</dbReference>
<dbReference type="GO" id="GO:0016042">
    <property type="term" value="P:lipid catabolic process"/>
    <property type="evidence" value="ECO:0007669"/>
    <property type="project" value="InterPro"/>
</dbReference>
<dbReference type="GO" id="GO:0034374">
    <property type="term" value="P:low-density lipoprotein particle remodeling"/>
    <property type="evidence" value="ECO:0000314"/>
    <property type="project" value="BHF-UCL"/>
</dbReference>
<dbReference type="GO" id="GO:0042130">
    <property type="term" value="P:negative regulation of T cell proliferation"/>
    <property type="evidence" value="ECO:0000318"/>
    <property type="project" value="GO_Central"/>
</dbReference>
<dbReference type="GO" id="GO:0046473">
    <property type="term" value="P:phosphatidic acid metabolic process"/>
    <property type="evidence" value="ECO:0000314"/>
    <property type="project" value="BHF-UCL"/>
</dbReference>
<dbReference type="GO" id="GO:0046470">
    <property type="term" value="P:phosphatidylcholine metabolic process"/>
    <property type="evidence" value="ECO:0000314"/>
    <property type="project" value="UniProtKB"/>
</dbReference>
<dbReference type="GO" id="GO:0046337">
    <property type="term" value="P:phosphatidylethanolamine metabolic process"/>
    <property type="evidence" value="ECO:0000314"/>
    <property type="project" value="UniProtKB"/>
</dbReference>
<dbReference type="GO" id="GO:0046471">
    <property type="term" value="P:phosphatidylglycerol metabolic process"/>
    <property type="evidence" value="ECO:0000318"/>
    <property type="project" value="GO_Central"/>
</dbReference>
<dbReference type="GO" id="GO:0006644">
    <property type="term" value="P:phospholipid metabolic process"/>
    <property type="evidence" value="ECO:0000314"/>
    <property type="project" value="BHF-UCL"/>
</dbReference>
<dbReference type="GO" id="GO:0070374">
    <property type="term" value="P:positive regulation of ERK1 and ERK2 cascade"/>
    <property type="evidence" value="ECO:0000314"/>
    <property type="project" value="CACAO"/>
</dbReference>
<dbReference type="GO" id="GO:0050729">
    <property type="term" value="P:positive regulation of inflammatory response"/>
    <property type="evidence" value="ECO:0000304"/>
    <property type="project" value="BHF-UCL"/>
</dbReference>
<dbReference type="GO" id="GO:0010744">
    <property type="term" value="P:positive regulation of macrophage derived foam cell differentiation"/>
    <property type="evidence" value="ECO:0000304"/>
    <property type="project" value="BHF-UCL"/>
</dbReference>
<dbReference type="GO" id="GO:1902563">
    <property type="term" value="P:regulation of neutrophil activation"/>
    <property type="evidence" value="ECO:0000314"/>
    <property type="project" value="UniProtKB"/>
</dbReference>
<dbReference type="CDD" id="cd00125">
    <property type="entry name" value="PLA2c"/>
    <property type="match status" value="1"/>
</dbReference>
<dbReference type="FunFam" id="1.20.90.10:FF:000001">
    <property type="entry name" value="Basic phospholipase A2 homolog"/>
    <property type="match status" value="1"/>
</dbReference>
<dbReference type="Gene3D" id="1.20.90.10">
    <property type="entry name" value="Phospholipase A2 domain"/>
    <property type="match status" value="1"/>
</dbReference>
<dbReference type="InterPro" id="IPR001211">
    <property type="entry name" value="PLipase_A2"/>
</dbReference>
<dbReference type="InterPro" id="IPR033112">
    <property type="entry name" value="PLipase_A2_Asp_AS"/>
</dbReference>
<dbReference type="InterPro" id="IPR016090">
    <property type="entry name" value="PLipase_A2_dom"/>
</dbReference>
<dbReference type="InterPro" id="IPR036444">
    <property type="entry name" value="PLipase_A2_dom_sf"/>
</dbReference>
<dbReference type="InterPro" id="IPR033113">
    <property type="entry name" value="PLipase_A2_His_AS"/>
</dbReference>
<dbReference type="PANTHER" id="PTHR11716">
    <property type="entry name" value="PHOSPHOLIPASE A2 FAMILY MEMBER"/>
    <property type="match status" value="1"/>
</dbReference>
<dbReference type="PANTHER" id="PTHR11716:SF9">
    <property type="entry name" value="PHOSPHOLIPASE A2, MEMBRANE ASSOCIATED"/>
    <property type="match status" value="1"/>
</dbReference>
<dbReference type="Pfam" id="PF00068">
    <property type="entry name" value="Phospholip_A2_1"/>
    <property type="match status" value="1"/>
</dbReference>
<dbReference type="PRINTS" id="PR00389">
    <property type="entry name" value="PHPHLIPASEA2"/>
</dbReference>
<dbReference type="SMART" id="SM00085">
    <property type="entry name" value="PA2c"/>
    <property type="match status" value="1"/>
</dbReference>
<dbReference type="SUPFAM" id="SSF48619">
    <property type="entry name" value="Phospholipase A2, PLA2"/>
    <property type="match status" value="1"/>
</dbReference>
<dbReference type="PROSITE" id="PS00119">
    <property type="entry name" value="PA2_ASP"/>
    <property type="match status" value="1"/>
</dbReference>
<dbReference type="PROSITE" id="PS00118">
    <property type="entry name" value="PA2_HIS"/>
    <property type="match status" value="1"/>
</dbReference>
<name>PA2GA_HUMAN</name>
<accession>P14555</accession>
<accession>A8K5I7</accession>
<accession>Q6DN24</accession>
<accession>Q6IBD9</accession>
<accession>Q9UCD2</accession>
<gene>
    <name type="primary">PLA2G2A</name>
    <name type="synonym">PLA2B</name>
    <name type="synonym">PLA2L</name>
    <name type="synonym">RASF-A</name>
</gene>
<sequence>MKTLLLLAVIMIFGLLQAHGNLVNFHRMIKLTTGKEAALSYGFYGCHCGVGGRGSPKDATDRCCVTHDCCYKRLEKRGCGTKFLSYKFSNSGSRITCAKQDSCRSQLCECDKAAATCFARNKTTYNKKYQYYSNKHCRGSTPRC</sequence>
<protein>
    <recommendedName>
        <fullName>Phospholipase A2, membrane associated</fullName>
        <ecNumber evidence="6 7 18">3.1.1.4</ecNumber>
    </recommendedName>
    <alternativeName>
        <fullName>GIIC sPLA2</fullName>
    </alternativeName>
    <alternativeName>
        <fullName>Group IIA phospholipase A2</fullName>
    </alternativeName>
    <alternativeName>
        <fullName>Non-pancreatic secretory phospholipase A2</fullName>
        <shortName>NPS-PLA2</shortName>
    </alternativeName>
    <alternativeName>
        <fullName>Phosphatidylcholine 2-acylhydrolase 2A</fullName>
    </alternativeName>
</protein>
<proteinExistence type="evidence at protein level"/>
<organism>
    <name type="scientific">Homo sapiens</name>
    <name type="common">Human</name>
    <dbReference type="NCBI Taxonomy" id="9606"/>
    <lineage>
        <taxon>Eukaryota</taxon>
        <taxon>Metazoa</taxon>
        <taxon>Chordata</taxon>
        <taxon>Craniata</taxon>
        <taxon>Vertebrata</taxon>
        <taxon>Euteleostomi</taxon>
        <taxon>Mammalia</taxon>
        <taxon>Eutheria</taxon>
        <taxon>Euarchontoglires</taxon>
        <taxon>Primates</taxon>
        <taxon>Haplorrhini</taxon>
        <taxon>Catarrhini</taxon>
        <taxon>Hominidae</taxon>
        <taxon>Homo</taxon>
    </lineage>
</organism>
<comment type="function">
    <text evidence="2 5 6 7 8 9 14 18">Secretory calcium-dependent phospholipase A2 that primarily targets extracellular phospholipids with implications in host antimicrobial defense, inflammatory response and tissue regeneration (PubMed:10455175, PubMed:10681567, PubMed:2925633). Hydrolyzes the ester bond of the fatty acyl group attached at sn-2 position of phospholipids (phospholipase A2 activity) with preference for phosphatidylethanolamines and phosphatidylglycerols over phosphatidylcholines (PubMed:10455175, PubMed:10681567). Contributes to lipid remodeling of cellular membranes and generation of lipid mediators involved in pathogen clearance. Displays bactericidal activity against Gram-positive bacteria by directly hydrolyzing phospholipids of the bacterial membrane (PubMed:10358193, PubMed:11694541). Upon sterile inflammation, targets membrane phospholipids of extracellular mitochondria released from activated platelets, generating free unsaturated fatty acids such as arachidonate that is used by neighboring leukocytes to synthesize inflammatory eicosanoids such as leukotrienes. Simultaneously, by compromising mitochondrial membrane integrity, promotes the release in circulation of potent damage-associated molecular pattern molecules that activate the innate immune response (PubMed:25082876). Plays a stem cell regulator role in the intestinal crypt. Within intracellular compartment mediates Paneth cell differentiation and its stem cell supporting functions by inhibiting Wnt signaling pathway in intestinal stem cell (ICS). Secreted in the intestinal lumen upon inflammation, acts in an autocrine way and promotes prostaglandin E2 synthesis that stimulates Wnt signaling pathway in ICS cells and tissue regeneration (By similarity). May play a role in the biosynthesis of N-acyl ethanolamines that regulate energy metabolism and inflammation. Hydrolyzes N-acyl phosphatidylethanolamines to N-acyl lysophosphatidylethanolamines, which are further cleaved by a lysophospholipase D to release N-acyl ethanolamines (PubMed:14998370). Independent of its catalytic activity, acts as a ligand for integrins (PubMed:18635536, PubMed:25398877). Binds to and activates integrins ITGAV:ITGB3, ITGA4:ITGB1 and ITGA5:ITGB1 (PubMed:18635536, PubMed:25398877). Binds to a site (site 2) which is distinct from the classical ligand-binding site (site 1) and induces integrin conformational changes and enhanced ligand binding to site 1 (PubMed:25398877). Induces cell proliferation in an integrin-dependent manner (PubMed:18635536).</text>
</comment>
<comment type="catalytic activity">
    <reaction evidence="6 7">
        <text>a 1,2-diacyl-sn-glycero-3-phosphoethanolamine + H2O = a 1-acyl-sn-glycero-3-phosphoethanolamine + a fatty acid + H(+)</text>
        <dbReference type="Rhea" id="RHEA:44604"/>
        <dbReference type="ChEBI" id="CHEBI:15377"/>
        <dbReference type="ChEBI" id="CHEBI:15378"/>
        <dbReference type="ChEBI" id="CHEBI:28868"/>
        <dbReference type="ChEBI" id="CHEBI:64381"/>
        <dbReference type="ChEBI" id="CHEBI:64612"/>
    </reaction>
    <physiologicalReaction direction="left-to-right" evidence="27 28">
        <dbReference type="Rhea" id="RHEA:44605"/>
    </physiologicalReaction>
</comment>
<comment type="catalytic activity">
    <reaction evidence="6 7">
        <text>1-hexadecanoyl-2-(9Z-octadecenoyl)-sn-glycero-3-phosphoethanolamine + H2O = 1-hexadecanoyl-sn-glycero-3-phosphoethanolamine + (9Z)-octadecenoate + H(+)</text>
        <dbReference type="Rhea" id="RHEA:40911"/>
        <dbReference type="ChEBI" id="CHEBI:15377"/>
        <dbReference type="ChEBI" id="CHEBI:15378"/>
        <dbReference type="ChEBI" id="CHEBI:30823"/>
        <dbReference type="ChEBI" id="CHEBI:73004"/>
        <dbReference type="ChEBI" id="CHEBI:73007"/>
    </reaction>
    <physiologicalReaction direction="left-to-right" evidence="27 28">
        <dbReference type="Rhea" id="RHEA:40912"/>
    </physiologicalReaction>
</comment>
<comment type="catalytic activity">
    <reaction evidence="6 7 9">
        <text>1-hexadecanoyl-2-(9Z,12Z-octadecadienoyl)-sn-glycero-3-phosphoethanolamine + H2O = 1-hexadecanoyl-sn-glycero-3-phosphoethanolamine + (9Z,12Z)-octadecadienoate + H(+)</text>
        <dbReference type="Rhea" id="RHEA:40815"/>
        <dbReference type="ChEBI" id="CHEBI:15377"/>
        <dbReference type="ChEBI" id="CHEBI:15378"/>
        <dbReference type="ChEBI" id="CHEBI:30245"/>
        <dbReference type="ChEBI" id="CHEBI:73004"/>
        <dbReference type="ChEBI" id="CHEBI:73008"/>
    </reaction>
    <physiologicalReaction direction="left-to-right" evidence="27 28 29">
        <dbReference type="Rhea" id="RHEA:40816"/>
    </physiologicalReaction>
</comment>
<comment type="catalytic activity">
    <reaction evidence="5 7">
        <text>1-hexadecanoyl-2-(5Z,8Z,11Z,14Z-eicosatetraenoyl)-sn-glycero-3-phosphoethanolamine + H2O = 1-hexadecanoyl-sn-glycero-3-phosphoethanolamine + (5Z,8Z,11Z,14Z)-eicosatetraenoate + H(+)</text>
        <dbReference type="Rhea" id="RHEA:40431"/>
        <dbReference type="ChEBI" id="CHEBI:15377"/>
        <dbReference type="ChEBI" id="CHEBI:15378"/>
        <dbReference type="ChEBI" id="CHEBI:32395"/>
        <dbReference type="ChEBI" id="CHEBI:73004"/>
        <dbReference type="ChEBI" id="CHEBI:73009"/>
    </reaction>
    <physiologicalReaction direction="left-to-right" evidence="26 28">
        <dbReference type="Rhea" id="RHEA:40432"/>
    </physiologicalReaction>
</comment>
<comment type="catalytic activity">
    <reaction evidence="9">
        <text>N-hexadecanoyl-1,2-di-(9Z-octadecenoyl)-sn-glycero-3-phosphoethanolamine + H2O = N-hexadecanoyl-1-(9Z-octadecenoyl)-sn-glycero-3-phosphoethanolamine + (9Z)-octadecenoate + H(+)</text>
        <dbReference type="Rhea" id="RHEA:45424"/>
        <dbReference type="ChEBI" id="CHEBI:15377"/>
        <dbReference type="ChEBI" id="CHEBI:15378"/>
        <dbReference type="ChEBI" id="CHEBI:30823"/>
        <dbReference type="ChEBI" id="CHEBI:78097"/>
        <dbReference type="ChEBI" id="CHEBI:85217"/>
    </reaction>
    <physiologicalReaction direction="left-to-right" evidence="29">
        <dbReference type="Rhea" id="RHEA:45425"/>
    </physiologicalReaction>
</comment>
<comment type="catalytic activity">
    <reaction evidence="7">
        <text>1,2-dihexadecanoyl-sn-glycero-3-phospho-(1'-sn-glycerol) + H2O = 1-hexadecanoyl-sn-glycero-3-phospho-(1'-sn-glycerol) + hexadecanoate + H(+)</text>
        <dbReference type="Rhea" id="RHEA:45472"/>
        <dbReference type="ChEBI" id="CHEBI:7896"/>
        <dbReference type="ChEBI" id="CHEBI:15377"/>
        <dbReference type="ChEBI" id="CHEBI:15378"/>
        <dbReference type="ChEBI" id="CHEBI:72829"/>
        <dbReference type="ChEBI" id="CHEBI:75158"/>
    </reaction>
    <physiologicalReaction direction="left-to-right" evidence="28">
        <dbReference type="Rhea" id="RHEA:45473"/>
    </physiologicalReaction>
</comment>
<comment type="catalytic activity">
    <reaction evidence="7">
        <text>1-hexadecanoyl-2-(9Z-octadecenoyl)-sn-glycero-3-phosphoglycerol + H2O = 1-hexadecanoyl-sn-glycero-3-phosphoglycerol + (9Z)-octadecenoate + H(+)</text>
        <dbReference type="Rhea" id="RHEA:44524"/>
        <dbReference type="ChEBI" id="CHEBI:15377"/>
        <dbReference type="ChEBI" id="CHEBI:15378"/>
        <dbReference type="ChEBI" id="CHEBI:30823"/>
        <dbReference type="ChEBI" id="CHEBI:84472"/>
        <dbReference type="ChEBI" id="CHEBI:84475"/>
    </reaction>
    <physiologicalReaction direction="left-to-right" evidence="28">
        <dbReference type="Rhea" id="RHEA:44525"/>
    </physiologicalReaction>
</comment>
<comment type="catalytic activity">
    <reaction evidence="6">
        <text>1-hexadecanoyl-2-(9Z-octadecenoyl)-sn-glycero-3-phospho-(1'-sn-glycerol) + H2O = 1-hexadecanoyl-sn-glycero-3-phospho-(1'-sn-glycerol) + (9Z)-octadecenoate + H(+)</text>
        <dbReference type="Rhea" id="RHEA:40919"/>
        <dbReference type="ChEBI" id="CHEBI:15377"/>
        <dbReference type="ChEBI" id="CHEBI:15378"/>
        <dbReference type="ChEBI" id="CHEBI:30823"/>
        <dbReference type="ChEBI" id="CHEBI:72841"/>
        <dbReference type="ChEBI" id="CHEBI:75158"/>
    </reaction>
    <physiologicalReaction direction="left-to-right" evidence="27">
        <dbReference type="Rhea" id="RHEA:40920"/>
    </physiologicalReaction>
</comment>
<comment type="catalytic activity">
    <reaction evidence="3 4 6 7 18">
        <text>a 1,2-diacyl-sn-glycero-3-phosphocholine + H2O = a 1-acyl-sn-glycero-3-phosphocholine + a fatty acid + H(+)</text>
        <dbReference type="Rhea" id="RHEA:15801"/>
        <dbReference type="ChEBI" id="CHEBI:15377"/>
        <dbReference type="ChEBI" id="CHEBI:15378"/>
        <dbReference type="ChEBI" id="CHEBI:28868"/>
        <dbReference type="ChEBI" id="CHEBI:57643"/>
        <dbReference type="ChEBI" id="CHEBI:58168"/>
        <dbReference type="EC" id="3.1.1.4"/>
    </reaction>
    <physiologicalReaction direction="left-to-right" evidence="27 28">
        <dbReference type="Rhea" id="RHEA:15802"/>
    </physiologicalReaction>
</comment>
<comment type="catalytic activity">
    <reaction evidence="6 7">
        <text>1,2-dihexadecanoyl-sn-glycero-3-phosphocholine + H2O = 1-hexadecanoyl-sn-glycero-3-phosphocholine + hexadecanoate + H(+)</text>
        <dbReference type="Rhea" id="RHEA:41223"/>
        <dbReference type="ChEBI" id="CHEBI:7896"/>
        <dbReference type="ChEBI" id="CHEBI:15377"/>
        <dbReference type="ChEBI" id="CHEBI:15378"/>
        <dbReference type="ChEBI" id="CHEBI:72998"/>
        <dbReference type="ChEBI" id="CHEBI:72999"/>
    </reaction>
    <physiologicalReaction direction="left-to-right" evidence="27 28">
        <dbReference type="Rhea" id="RHEA:41224"/>
    </physiologicalReaction>
</comment>
<comment type="catalytic activity">
    <reaction evidence="7">
        <text>1-hexadecanoyl-2-(9Z-octadecenoyl)-sn-glycero-3-phosphocholine + H2O = 1-hexadecanoyl-sn-glycero-3-phosphocholine + (9Z)-octadecenoate + H(+)</text>
        <dbReference type="Rhea" id="RHEA:38779"/>
        <dbReference type="ChEBI" id="CHEBI:15377"/>
        <dbReference type="ChEBI" id="CHEBI:15378"/>
        <dbReference type="ChEBI" id="CHEBI:30823"/>
        <dbReference type="ChEBI" id="CHEBI:72998"/>
        <dbReference type="ChEBI" id="CHEBI:73001"/>
    </reaction>
    <physiologicalReaction direction="left-to-right" evidence="28">
        <dbReference type="Rhea" id="RHEA:38780"/>
    </physiologicalReaction>
</comment>
<comment type="catalytic activity">
    <reaction evidence="7">
        <text>1-hexadecanoyl-2-(9Z,12Z-octadecadienoyl)-sn-glycero-3-phosphocholine + H2O = (9Z,12Z)-octadecadienoate + 1-hexadecanoyl-sn-glycero-3-phosphocholine + H(+)</text>
        <dbReference type="Rhea" id="RHEA:40811"/>
        <dbReference type="ChEBI" id="CHEBI:15377"/>
        <dbReference type="ChEBI" id="CHEBI:15378"/>
        <dbReference type="ChEBI" id="CHEBI:30245"/>
        <dbReference type="ChEBI" id="CHEBI:72998"/>
        <dbReference type="ChEBI" id="CHEBI:73002"/>
    </reaction>
    <physiologicalReaction direction="left-to-right" evidence="28">
        <dbReference type="Rhea" id="RHEA:40812"/>
    </physiologicalReaction>
</comment>
<comment type="catalytic activity">
    <reaction evidence="7">
        <text>1-hexadecanoyl-2-(4Z,7Z,10Z,13Z,16Z,19Z-docosahexaenoyl)-sn-glycero-3-phosphocholine + H2O = (4Z,7Z,10Z,13Z,16Z,19Z)-docosahexaenoate + 1-hexadecanoyl-sn-glycero-3-phosphocholine + H(+)</text>
        <dbReference type="Rhea" id="RHEA:41231"/>
        <dbReference type="ChEBI" id="CHEBI:15377"/>
        <dbReference type="ChEBI" id="CHEBI:15378"/>
        <dbReference type="ChEBI" id="CHEBI:72998"/>
        <dbReference type="ChEBI" id="CHEBI:74963"/>
        <dbReference type="ChEBI" id="CHEBI:77016"/>
    </reaction>
    <physiologicalReaction direction="left-to-right" evidence="28">
        <dbReference type="Rhea" id="RHEA:41232"/>
    </physiologicalReaction>
</comment>
<comment type="cofactor">
    <cofactor evidence="18">
        <name>Ca(2+)</name>
        <dbReference type="ChEBI" id="CHEBI:29108"/>
    </cofactor>
    <text>Binds 1 Ca(2+) ion per subunit.</text>
</comment>
<comment type="subcellular location">
    <subcellularLocation>
        <location evidence="17 18">Secreted</location>
    </subcellularLocation>
    <subcellularLocation>
        <location evidence="16">Cell membrane</location>
        <topology evidence="25">Peripheral membrane protein</topology>
    </subcellularLocation>
    <subcellularLocation>
        <location evidence="14">Mitochondrion outer membrane</location>
        <topology evidence="25">Peripheral membrane protein</topology>
    </subcellularLocation>
</comment>
<comment type="tissue specificity">
    <text evidence="6 7 14">Expressed in various tissues including heart, kidney, liver, lung, pancreas, placenta, skeletal muscle, prostate, ovary, colon and small intestine. Not detected in lymphoid organs and brain (PubMed:10455175, PubMed:10681567). Expressed in platelets (at protein level) (PubMed:25082876).</text>
</comment>
<comment type="miscellaneous">
    <text>Group II phospholipase A2 is found in many cells and also extracellularly. The membrane-bound and secreted forms are identical and are encoded by a single gene.</text>
</comment>
<comment type="miscellaneous">
    <text evidence="13">Interaction with integrin ITGA4:ITGB3 is inhibited by a number of synthetic peptides including R-Ala-Trp-Asp-Ile and R-Gly-Arg-Gly-Asp-Asp-Asp which bind to PLA2G2A and disrupt its integrin-binding activity.</text>
</comment>
<comment type="similarity">
    <text evidence="25">Belongs to the phospholipase A2 family.</text>
</comment>
<comment type="online information" name="Atlas of Genetics and Cytogenetics in Oncology and Haematology">
    <link uri="https://atlasgeneticsoncology.org/gene/41730/PLA2G2A"/>
</comment>
<keyword id="KW-0002">3D-structure</keyword>
<keyword id="KW-0929">Antimicrobial</keyword>
<keyword id="KW-0081">Bacteriolytic enzyme</keyword>
<keyword id="KW-0106">Calcium</keyword>
<keyword id="KW-1003">Cell membrane</keyword>
<keyword id="KW-0903">Direct protein sequencing</keyword>
<keyword id="KW-1015">Disulfide bond</keyword>
<keyword id="KW-0378">Hydrolase</keyword>
<keyword id="KW-0395">Inflammatory response</keyword>
<keyword id="KW-0443">Lipid metabolism</keyword>
<keyword id="KW-0472">Membrane</keyword>
<keyword id="KW-0479">Metal-binding</keyword>
<keyword id="KW-0496">Mitochondrion</keyword>
<keyword id="KW-1000">Mitochondrion outer membrane</keyword>
<keyword id="KW-1208">Phospholipid metabolism</keyword>
<keyword id="KW-1267">Proteomics identification</keyword>
<keyword id="KW-1185">Reference proteome</keyword>
<keyword id="KW-0964">Secreted</keyword>
<keyword id="KW-0732">Signal</keyword>
<evidence type="ECO:0000250" key="1"/>
<evidence type="ECO:0000250" key="2">
    <source>
        <dbReference type="UniProtKB" id="P31482"/>
    </source>
</evidence>
<evidence type="ECO:0000255" key="3">
    <source>
        <dbReference type="PROSITE-ProRule" id="PRU10035"/>
    </source>
</evidence>
<evidence type="ECO:0000255" key="4">
    <source>
        <dbReference type="PROSITE-ProRule" id="PRU10036"/>
    </source>
</evidence>
<evidence type="ECO:0000269" key="5">
    <source>
    </source>
</evidence>
<evidence type="ECO:0000269" key="6">
    <source>
    </source>
</evidence>
<evidence type="ECO:0000269" key="7">
    <source>
    </source>
</evidence>
<evidence type="ECO:0000269" key="8">
    <source>
    </source>
</evidence>
<evidence type="ECO:0000269" key="9">
    <source>
    </source>
</evidence>
<evidence type="ECO:0000269" key="10">
    <source>
    </source>
</evidence>
<evidence type="ECO:0000269" key="11">
    <source>
    </source>
</evidence>
<evidence type="ECO:0000269" key="12">
    <source>
    </source>
</evidence>
<evidence type="ECO:0000269" key="13">
    <source>
    </source>
</evidence>
<evidence type="ECO:0000269" key="14">
    <source>
    </source>
</evidence>
<evidence type="ECO:0000269" key="15">
    <source>
    </source>
</evidence>
<evidence type="ECO:0000269" key="16">
    <source>
    </source>
</evidence>
<evidence type="ECO:0000269" key="17">
    <source>
    </source>
</evidence>
<evidence type="ECO:0000269" key="18">
    <source>
    </source>
</evidence>
<evidence type="ECO:0000269" key="19">
    <source>
    </source>
</evidence>
<evidence type="ECO:0000269" key="20">
    <source>
    </source>
</evidence>
<evidence type="ECO:0000269" key="21">
    <source>
    </source>
</evidence>
<evidence type="ECO:0000269" key="22">
    <source>
    </source>
</evidence>
<evidence type="ECO:0000269" key="23">
    <source>
    </source>
</evidence>
<evidence type="ECO:0000269" key="24">
    <source ref="6"/>
</evidence>
<evidence type="ECO:0000305" key="25"/>
<evidence type="ECO:0000305" key="26">
    <source>
    </source>
</evidence>
<evidence type="ECO:0000305" key="27">
    <source>
    </source>
</evidence>
<evidence type="ECO:0000305" key="28">
    <source>
    </source>
</evidence>
<evidence type="ECO:0000305" key="29">
    <source>
    </source>
</evidence>
<evidence type="ECO:0000312" key="30">
    <source>
        <dbReference type="PDB" id="1BBC"/>
    </source>
</evidence>
<evidence type="ECO:0000312" key="31">
    <source>
        <dbReference type="PDB" id="1DB4"/>
    </source>
</evidence>
<evidence type="ECO:0000312" key="32">
    <source>
        <dbReference type="PDB" id="1DB5"/>
    </source>
</evidence>
<evidence type="ECO:0000312" key="33">
    <source>
        <dbReference type="PDB" id="1DCY"/>
    </source>
</evidence>
<evidence type="ECO:0000312" key="34">
    <source>
        <dbReference type="PDB" id="1POD"/>
    </source>
</evidence>
<evidence type="ECO:0000312" key="35">
    <source>
        <dbReference type="PDB" id="1POE"/>
    </source>
</evidence>
<evidence type="ECO:0007829" key="36">
    <source>
        <dbReference type="PDB" id="1POE"/>
    </source>
</evidence>
<evidence type="ECO:0007829" key="37">
    <source>
        <dbReference type="PDB" id="3U8I"/>
    </source>
</evidence>